<organism>
    <name type="scientific">Xanthomonas campestris pv. campestris (strain B100)</name>
    <dbReference type="NCBI Taxonomy" id="509169"/>
    <lineage>
        <taxon>Bacteria</taxon>
        <taxon>Pseudomonadati</taxon>
        <taxon>Pseudomonadota</taxon>
        <taxon>Gammaproteobacteria</taxon>
        <taxon>Lysobacterales</taxon>
        <taxon>Lysobacteraceae</taxon>
        <taxon>Xanthomonas</taxon>
    </lineage>
</organism>
<sequence length="363" mass="39257">MSDTSPNYHTLQSIGWPWPGPPEDPAWQAIFAAHPQALPARVVEQHRTGYVVADTPEASLKAESLPEWQRPRFPSHERAAVGDWVLMEGKRIVALLPRRTSIKRGAAGEHYHQQVIAANIDTVFIVCGLDADFNPRRIERYLLLVGGGGAEPVVVLTKADQTEYAEDALAVLEELEAQNIALRAVNAKDPESVAALRPWLGDGRTAVLVGSSGAGKSTLTNTLLGTQKMKTNAVRENDSRGRHTTTHRALIPLPSGACLIDTPGMRELKPTGEEDLAEGGFSDVEALAAQCRFNDCAHIAEPGCAVRAAIEADQLDPERVANYMKLRVEVASAAEKLATRVAQNNRGKGSGKRPASVDRPGRR</sequence>
<proteinExistence type="inferred from homology"/>
<name>RSGA_XANCB</name>
<keyword id="KW-0963">Cytoplasm</keyword>
<keyword id="KW-0342">GTP-binding</keyword>
<keyword id="KW-0378">Hydrolase</keyword>
<keyword id="KW-0479">Metal-binding</keyword>
<keyword id="KW-0547">Nucleotide-binding</keyword>
<keyword id="KW-0690">Ribosome biogenesis</keyword>
<keyword id="KW-0694">RNA-binding</keyword>
<keyword id="KW-0699">rRNA-binding</keyword>
<keyword id="KW-0862">Zinc</keyword>
<reference key="1">
    <citation type="journal article" date="2008" name="J. Biotechnol.">
        <title>The genome of Xanthomonas campestris pv. campestris B100 and its use for the reconstruction of metabolic pathways involved in xanthan biosynthesis.</title>
        <authorList>
            <person name="Vorhoelter F.-J."/>
            <person name="Schneiker S."/>
            <person name="Goesmann A."/>
            <person name="Krause L."/>
            <person name="Bekel T."/>
            <person name="Kaiser O."/>
            <person name="Linke B."/>
            <person name="Patschkowski T."/>
            <person name="Rueckert C."/>
            <person name="Schmid J."/>
            <person name="Sidhu V.K."/>
            <person name="Sieber V."/>
            <person name="Tauch A."/>
            <person name="Watt S.A."/>
            <person name="Weisshaar B."/>
            <person name="Becker A."/>
            <person name="Niehaus K."/>
            <person name="Puehler A."/>
        </authorList>
    </citation>
    <scope>NUCLEOTIDE SEQUENCE [LARGE SCALE GENOMIC DNA]</scope>
    <source>
        <strain>B100</strain>
    </source>
</reference>
<accession>B0RNZ3</accession>
<gene>
    <name evidence="1" type="primary">rsgA</name>
    <name type="ordered locus">xcc-b100_0835</name>
</gene>
<feature type="chain" id="PRO_1000188152" description="Small ribosomal subunit biogenesis GTPase RsgA">
    <location>
        <begin position="1"/>
        <end position="363"/>
    </location>
</feature>
<feature type="domain" description="CP-type G" evidence="2">
    <location>
        <begin position="112"/>
        <end position="268"/>
    </location>
</feature>
<feature type="region of interest" description="Disordered" evidence="3">
    <location>
        <begin position="340"/>
        <end position="363"/>
    </location>
</feature>
<feature type="binding site" evidence="1">
    <location>
        <begin position="157"/>
        <end position="160"/>
    </location>
    <ligand>
        <name>GTP</name>
        <dbReference type="ChEBI" id="CHEBI:37565"/>
    </ligand>
</feature>
<feature type="binding site" evidence="1">
    <location>
        <begin position="210"/>
        <end position="218"/>
    </location>
    <ligand>
        <name>GTP</name>
        <dbReference type="ChEBI" id="CHEBI:37565"/>
    </ligand>
</feature>
<feature type="binding site" evidence="1">
    <location>
        <position position="291"/>
    </location>
    <ligand>
        <name>Zn(2+)</name>
        <dbReference type="ChEBI" id="CHEBI:29105"/>
    </ligand>
</feature>
<feature type="binding site" evidence="1">
    <location>
        <position position="296"/>
    </location>
    <ligand>
        <name>Zn(2+)</name>
        <dbReference type="ChEBI" id="CHEBI:29105"/>
    </ligand>
</feature>
<feature type="binding site" evidence="1">
    <location>
        <position position="298"/>
    </location>
    <ligand>
        <name>Zn(2+)</name>
        <dbReference type="ChEBI" id="CHEBI:29105"/>
    </ligand>
</feature>
<feature type="binding site" evidence="1">
    <location>
        <position position="304"/>
    </location>
    <ligand>
        <name>Zn(2+)</name>
        <dbReference type="ChEBI" id="CHEBI:29105"/>
    </ligand>
</feature>
<comment type="function">
    <text evidence="1">One of several proteins that assist in the late maturation steps of the functional core of the 30S ribosomal subunit. Helps release RbfA from mature subunits. May play a role in the assembly of ribosomal proteins into the subunit. Circularly permuted GTPase that catalyzes slow GTP hydrolysis, GTPase activity is stimulated by the 30S ribosomal subunit.</text>
</comment>
<comment type="cofactor">
    <cofactor evidence="1">
        <name>Zn(2+)</name>
        <dbReference type="ChEBI" id="CHEBI:29105"/>
    </cofactor>
    <text evidence="1">Binds 1 zinc ion per subunit.</text>
</comment>
<comment type="subunit">
    <text evidence="1">Monomer. Associates with 30S ribosomal subunit, binds 16S rRNA.</text>
</comment>
<comment type="subcellular location">
    <subcellularLocation>
        <location evidence="1">Cytoplasm</location>
    </subcellularLocation>
</comment>
<comment type="similarity">
    <text evidence="1">Belongs to the TRAFAC class YlqF/YawG GTPase family. RsgA subfamily.</text>
</comment>
<protein>
    <recommendedName>
        <fullName evidence="1">Small ribosomal subunit biogenesis GTPase RsgA</fullName>
        <ecNumber evidence="1">3.6.1.-</ecNumber>
    </recommendedName>
</protein>
<dbReference type="EC" id="3.6.1.-" evidence="1"/>
<dbReference type="EMBL" id="AM920689">
    <property type="protein sequence ID" value="CAP50178.1"/>
    <property type="molecule type" value="Genomic_DNA"/>
</dbReference>
<dbReference type="SMR" id="B0RNZ3"/>
<dbReference type="KEGG" id="xca:xcc-b100_0835"/>
<dbReference type="HOGENOM" id="CLU_033617_0_1_6"/>
<dbReference type="Proteomes" id="UP000001188">
    <property type="component" value="Chromosome"/>
</dbReference>
<dbReference type="GO" id="GO:0005737">
    <property type="term" value="C:cytoplasm"/>
    <property type="evidence" value="ECO:0007669"/>
    <property type="project" value="UniProtKB-SubCell"/>
</dbReference>
<dbReference type="GO" id="GO:0005525">
    <property type="term" value="F:GTP binding"/>
    <property type="evidence" value="ECO:0007669"/>
    <property type="project" value="UniProtKB-UniRule"/>
</dbReference>
<dbReference type="GO" id="GO:0003924">
    <property type="term" value="F:GTPase activity"/>
    <property type="evidence" value="ECO:0007669"/>
    <property type="project" value="UniProtKB-UniRule"/>
</dbReference>
<dbReference type="GO" id="GO:0046872">
    <property type="term" value="F:metal ion binding"/>
    <property type="evidence" value="ECO:0007669"/>
    <property type="project" value="UniProtKB-KW"/>
</dbReference>
<dbReference type="GO" id="GO:0019843">
    <property type="term" value="F:rRNA binding"/>
    <property type="evidence" value="ECO:0007669"/>
    <property type="project" value="UniProtKB-KW"/>
</dbReference>
<dbReference type="GO" id="GO:0042274">
    <property type="term" value="P:ribosomal small subunit biogenesis"/>
    <property type="evidence" value="ECO:0007669"/>
    <property type="project" value="UniProtKB-UniRule"/>
</dbReference>
<dbReference type="CDD" id="cd01854">
    <property type="entry name" value="YjeQ_EngC"/>
    <property type="match status" value="1"/>
</dbReference>
<dbReference type="Gene3D" id="3.40.50.300">
    <property type="entry name" value="P-loop containing nucleotide triphosphate hydrolases"/>
    <property type="match status" value="1"/>
</dbReference>
<dbReference type="Gene3D" id="1.10.40.50">
    <property type="entry name" value="Probable gtpase engc, domain 3"/>
    <property type="match status" value="1"/>
</dbReference>
<dbReference type="HAMAP" id="MF_01820">
    <property type="entry name" value="GTPase_RsgA"/>
    <property type="match status" value="1"/>
</dbReference>
<dbReference type="InterPro" id="IPR030378">
    <property type="entry name" value="G_CP_dom"/>
</dbReference>
<dbReference type="InterPro" id="IPR027417">
    <property type="entry name" value="P-loop_NTPase"/>
</dbReference>
<dbReference type="InterPro" id="IPR004881">
    <property type="entry name" value="Ribosome_biogen_GTPase_RsgA"/>
</dbReference>
<dbReference type="InterPro" id="IPR010914">
    <property type="entry name" value="RsgA_GTPase_dom"/>
</dbReference>
<dbReference type="NCBIfam" id="TIGR00157">
    <property type="entry name" value="ribosome small subunit-dependent GTPase A"/>
    <property type="match status" value="1"/>
</dbReference>
<dbReference type="PANTHER" id="PTHR32120">
    <property type="entry name" value="SMALL RIBOSOMAL SUBUNIT BIOGENESIS GTPASE RSGA"/>
    <property type="match status" value="1"/>
</dbReference>
<dbReference type="PANTHER" id="PTHR32120:SF10">
    <property type="entry name" value="SMALL RIBOSOMAL SUBUNIT BIOGENESIS GTPASE RSGA"/>
    <property type="match status" value="1"/>
</dbReference>
<dbReference type="Pfam" id="PF03193">
    <property type="entry name" value="RsgA_GTPase"/>
    <property type="match status" value="1"/>
</dbReference>
<dbReference type="SUPFAM" id="SSF52540">
    <property type="entry name" value="P-loop containing nucleoside triphosphate hydrolases"/>
    <property type="match status" value="1"/>
</dbReference>
<dbReference type="PROSITE" id="PS50936">
    <property type="entry name" value="ENGC_GTPASE"/>
    <property type="match status" value="1"/>
</dbReference>
<dbReference type="PROSITE" id="PS51721">
    <property type="entry name" value="G_CP"/>
    <property type="match status" value="1"/>
</dbReference>
<evidence type="ECO:0000255" key="1">
    <source>
        <dbReference type="HAMAP-Rule" id="MF_01820"/>
    </source>
</evidence>
<evidence type="ECO:0000255" key="2">
    <source>
        <dbReference type="PROSITE-ProRule" id="PRU01058"/>
    </source>
</evidence>
<evidence type="ECO:0000256" key="3">
    <source>
        <dbReference type="SAM" id="MobiDB-lite"/>
    </source>
</evidence>